<gene>
    <name evidence="1" type="primary">psbT</name>
    <name type="ordered locus">P9303_22131</name>
</gene>
<feature type="chain" id="PRO_1000047095" description="Photosystem II reaction center protein T">
    <location>
        <begin position="1"/>
        <end position="35"/>
    </location>
</feature>
<feature type="transmembrane region" description="Helical" evidence="1">
    <location>
        <begin position="3"/>
        <end position="23"/>
    </location>
</feature>
<sequence length="35" mass="3836">MDAFAYTLLMTLVVATLFFAVAFRDPPKIGKDSGK</sequence>
<accession>A2CBT8</accession>
<keyword id="KW-0472">Membrane</keyword>
<keyword id="KW-0602">Photosynthesis</keyword>
<keyword id="KW-0604">Photosystem II</keyword>
<keyword id="KW-0793">Thylakoid</keyword>
<keyword id="KW-0812">Transmembrane</keyword>
<keyword id="KW-1133">Transmembrane helix</keyword>
<proteinExistence type="inferred from homology"/>
<reference key="1">
    <citation type="journal article" date="2007" name="PLoS Genet.">
        <title>Patterns and implications of gene gain and loss in the evolution of Prochlorococcus.</title>
        <authorList>
            <person name="Kettler G.C."/>
            <person name="Martiny A.C."/>
            <person name="Huang K."/>
            <person name="Zucker J."/>
            <person name="Coleman M.L."/>
            <person name="Rodrigue S."/>
            <person name="Chen F."/>
            <person name="Lapidus A."/>
            <person name="Ferriera S."/>
            <person name="Johnson J."/>
            <person name="Steglich C."/>
            <person name="Church G.M."/>
            <person name="Richardson P."/>
            <person name="Chisholm S.W."/>
        </authorList>
    </citation>
    <scope>NUCLEOTIDE SEQUENCE [LARGE SCALE GENOMIC DNA]</scope>
    <source>
        <strain>MIT 9303</strain>
    </source>
</reference>
<comment type="function">
    <text evidence="1">Found at the monomer-monomer interface of the photosystem II (PS II) dimer, plays a role in assembly and dimerization of PSII. PSII is a light-driven water plastoquinone oxidoreductase, using light energy to abstract electrons from H(2)O, generating a proton gradient subsequently used for ATP formation.</text>
</comment>
<comment type="subunit">
    <text evidence="2">PSII is composed of 1 copy each of membrane proteins PsbA, PsbB, PsbC, PsbD, PsbE, PsbF, PsbH, PsbI, PsbJ, PsbK, PsbL, PsbM, PsbT, PsbX, PsbY, Psb30/Ycf12, peripheral proteins PsbO, CyanoQ (PsbQ), PsbU, PsbV and a large number of cofactors. It forms dimeric complexes.</text>
</comment>
<comment type="subcellular location">
    <subcellularLocation>
        <location evidence="1">Cellular thylakoid membrane</location>
        <topology evidence="1">Single-pass membrane protein</topology>
    </subcellularLocation>
</comment>
<comment type="similarity">
    <text evidence="1">Belongs to the PsbT family.</text>
</comment>
<organism>
    <name type="scientific">Prochlorococcus marinus (strain MIT 9303)</name>
    <dbReference type="NCBI Taxonomy" id="59922"/>
    <lineage>
        <taxon>Bacteria</taxon>
        <taxon>Bacillati</taxon>
        <taxon>Cyanobacteriota</taxon>
        <taxon>Cyanophyceae</taxon>
        <taxon>Synechococcales</taxon>
        <taxon>Prochlorococcaceae</taxon>
        <taxon>Prochlorococcus</taxon>
    </lineage>
</organism>
<dbReference type="EMBL" id="CP000554">
    <property type="protein sequence ID" value="ABM78948.1"/>
    <property type="molecule type" value="Genomic_DNA"/>
</dbReference>
<dbReference type="RefSeq" id="WP_011131033.1">
    <property type="nucleotide sequence ID" value="NC_008820.1"/>
</dbReference>
<dbReference type="SMR" id="A2CBT8"/>
<dbReference type="STRING" id="59922.P9303_22131"/>
<dbReference type="KEGG" id="pmf:P9303_22131"/>
<dbReference type="HOGENOM" id="CLU_217078_1_0_3"/>
<dbReference type="BioCyc" id="PMAR59922:G1G80-1937-MONOMER"/>
<dbReference type="Proteomes" id="UP000002274">
    <property type="component" value="Chromosome"/>
</dbReference>
<dbReference type="GO" id="GO:0009539">
    <property type="term" value="C:photosystem II reaction center"/>
    <property type="evidence" value="ECO:0007669"/>
    <property type="project" value="InterPro"/>
</dbReference>
<dbReference type="GO" id="GO:0031676">
    <property type="term" value="C:plasma membrane-derived thylakoid membrane"/>
    <property type="evidence" value="ECO:0007669"/>
    <property type="project" value="UniProtKB-SubCell"/>
</dbReference>
<dbReference type="GO" id="GO:0015979">
    <property type="term" value="P:photosynthesis"/>
    <property type="evidence" value="ECO:0007669"/>
    <property type="project" value="UniProtKB-UniRule"/>
</dbReference>
<dbReference type="HAMAP" id="MF_00808">
    <property type="entry name" value="PSII_PsbT"/>
    <property type="match status" value="1"/>
</dbReference>
<dbReference type="InterPro" id="IPR001743">
    <property type="entry name" value="PSII_PsbT"/>
</dbReference>
<dbReference type="InterPro" id="IPR037268">
    <property type="entry name" value="PSII_PsbT_sf"/>
</dbReference>
<dbReference type="NCBIfam" id="NF008825">
    <property type="entry name" value="PRK11875.1"/>
    <property type="match status" value="1"/>
</dbReference>
<dbReference type="Pfam" id="PF01405">
    <property type="entry name" value="PsbT"/>
    <property type="match status" value="1"/>
</dbReference>
<dbReference type="SUPFAM" id="SSF161029">
    <property type="entry name" value="Photosystem II reaction center protein T, PsbT"/>
    <property type="match status" value="1"/>
</dbReference>
<name>PSBT_PROM3</name>
<evidence type="ECO:0000255" key="1">
    <source>
        <dbReference type="HAMAP-Rule" id="MF_00808"/>
    </source>
</evidence>
<evidence type="ECO:0000305" key="2"/>
<protein>
    <recommendedName>
        <fullName evidence="1">Photosystem II reaction center protein T</fullName>
        <shortName evidence="1">PSII-T</shortName>
    </recommendedName>
</protein>